<name>CYB_DIPPA</name>
<gene>
    <name type="primary">MT-CYB</name>
    <name type="synonym">COB</name>
    <name type="synonym">CYTB</name>
    <name type="synonym">MTCYB</name>
</gene>
<sequence length="79" mass="9094">SALFLAMHYTPDTLTAFSSVTHICRDVNYGWLIRYIHANGASLFFICLYLHIGRGIYYGSYSYMETWNIGIILLFLTMA</sequence>
<keyword id="KW-0249">Electron transport</keyword>
<keyword id="KW-0349">Heme</keyword>
<keyword id="KW-0408">Iron</keyword>
<keyword id="KW-0472">Membrane</keyword>
<keyword id="KW-0479">Metal-binding</keyword>
<keyword id="KW-0496">Mitochondrion</keyword>
<keyword id="KW-0999">Mitochondrion inner membrane</keyword>
<keyword id="KW-0679">Respiratory chain</keyword>
<keyword id="KW-0812">Transmembrane</keyword>
<keyword id="KW-1133">Transmembrane helix</keyword>
<keyword id="KW-0813">Transport</keyword>
<keyword id="KW-0830">Ubiquinone</keyword>
<protein>
    <recommendedName>
        <fullName>Cytochrome b</fullName>
    </recommendedName>
    <alternativeName>
        <fullName>Complex III subunit 3</fullName>
    </alternativeName>
    <alternativeName>
        <fullName>Complex III subunit III</fullName>
    </alternativeName>
    <alternativeName>
        <fullName>Cytochrome b-c1 complex subunit 3</fullName>
    </alternativeName>
    <alternativeName>
        <fullName>Ubiquinol-cytochrome-c reductase complex cytochrome b subunit</fullName>
    </alternativeName>
</protein>
<organism>
    <name type="scientific">Dipodomys panamintinus</name>
    <name type="common">Panamint kangaroo rat</name>
    <dbReference type="NCBI Taxonomy" id="10019"/>
    <lineage>
        <taxon>Eukaryota</taxon>
        <taxon>Metazoa</taxon>
        <taxon>Chordata</taxon>
        <taxon>Craniata</taxon>
        <taxon>Vertebrata</taxon>
        <taxon>Euteleostomi</taxon>
        <taxon>Mammalia</taxon>
        <taxon>Eutheria</taxon>
        <taxon>Euarchontoglires</taxon>
        <taxon>Glires</taxon>
        <taxon>Rodentia</taxon>
        <taxon>Castorimorpha</taxon>
        <taxon>Heteromyidae</taxon>
        <taxon>Dipodomyinae</taxon>
        <taxon>Dipodomys</taxon>
    </lineage>
</organism>
<reference key="1">
    <citation type="journal article" date="1989" name="Proc. Natl. Acad. Sci. U.S.A.">
        <title>Dynamics of mitochondrial DNA evolution in animals: amplification and sequencing with conserved primers.</title>
        <authorList>
            <person name="Kocher T.D."/>
            <person name="Thomas W.K."/>
            <person name="Meyer A."/>
            <person name="Edwards S.V."/>
            <person name="Paeaebo S."/>
            <person name="Villablanca F.X."/>
            <person name="Wilson A.C."/>
        </authorList>
    </citation>
    <scope>NUCLEOTIDE SEQUENCE [GENOMIC DNA]</scope>
</reference>
<comment type="function">
    <text evidence="2">Component of the ubiquinol-cytochrome c reductase complex (complex III or cytochrome b-c1 complex) that is part of the mitochondrial respiratory chain. The b-c1 complex mediates electron transfer from ubiquinol to cytochrome c. Contributes to the generation of a proton gradient across the mitochondrial membrane that is then used for ATP synthesis.</text>
</comment>
<comment type="cofactor">
    <cofactor evidence="2">
        <name>heme b</name>
        <dbReference type="ChEBI" id="CHEBI:60344"/>
    </cofactor>
    <text evidence="2">Binds 2 heme b groups non-covalently.</text>
</comment>
<comment type="subunit">
    <text evidence="2">The cytochrome bc1 complex contains 11 subunits: 3 respiratory subunits (MT-CYB, CYC1 and UQCRFS1), 2 core proteins (UQCRC1 and UQCRC2) and 6 low-molecular weight proteins (UQCRH/QCR6, UQCRB/QCR7, UQCRQ/QCR8, UQCR10/QCR9, UQCR11/QCR10 and a cleavage product of UQCRFS1). This cytochrome bc1 complex then forms a dimer.</text>
</comment>
<comment type="subcellular location">
    <subcellularLocation>
        <location evidence="2">Mitochondrion inner membrane</location>
        <topology evidence="2">Multi-pass membrane protein</topology>
    </subcellularLocation>
</comment>
<comment type="miscellaneous">
    <text evidence="1">Heme 1 (or BL or b562) is low-potential and absorbs at about 562 nm, and heme 2 (or BH or b566) is high-potential and absorbs at about 566 nm.</text>
</comment>
<comment type="similarity">
    <text evidence="3">Belongs to the cytochrome b family.</text>
</comment>
<comment type="caution">
    <text evidence="2">The full-length protein contains only eight transmembrane helices, not nine as predicted by bioinformatics tools.</text>
</comment>
<proteinExistence type="inferred from homology"/>
<dbReference type="EMBL" id="M25681">
    <property type="protein sequence ID" value="AAA31712.1"/>
    <property type="molecule type" value="Genomic_DNA"/>
</dbReference>
<dbReference type="EMBL" id="M25682">
    <property type="protein sequence ID" value="AAA31713.1"/>
    <property type="molecule type" value="Genomic_DNA"/>
</dbReference>
<dbReference type="PIR" id="A33285">
    <property type="entry name" value="A33285"/>
</dbReference>
<dbReference type="SMR" id="P16357"/>
<dbReference type="GO" id="GO:0005743">
    <property type="term" value="C:mitochondrial inner membrane"/>
    <property type="evidence" value="ECO:0007669"/>
    <property type="project" value="UniProtKB-SubCell"/>
</dbReference>
<dbReference type="GO" id="GO:0046872">
    <property type="term" value="F:metal ion binding"/>
    <property type="evidence" value="ECO:0007669"/>
    <property type="project" value="UniProtKB-KW"/>
</dbReference>
<dbReference type="GO" id="GO:0008121">
    <property type="term" value="F:ubiquinol-cytochrome-c reductase activity"/>
    <property type="evidence" value="ECO:0007669"/>
    <property type="project" value="TreeGrafter"/>
</dbReference>
<dbReference type="GO" id="GO:0006122">
    <property type="term" value="P:mitochondrial electron transport, ubiquinol to cytochrome c"/>
    <property type="evidence" value="ECO:0007669"/>
    <property type="project" value="TreeGrafter"/>
</dbReference>
<dbReference type="Gene3D" id="1.20.810.10">
    <property type="entry name" value="Cytochrome Bc1 Complex, Chain C"/>
    <property type="match status" value="1"/>
</dbReference>
<dbReference type="InterPro" id="IPR005797">
    <property type="entry name" value="Cyt_b/b6_N"/>
</dbReference>
<dbReference type="InterPro" id="IPR027387">
    <property type="entry name" value="Cytb/b6-like_sf"/>
</dbReference>
<dbReference type="InterPro" id="IPR016174">
    <property type="entry name" value="Di-haem_cyt_TM"/>
</dbReference>
<dbReference type="PANTHER" id="PTHR19271">
    <property type="entry name" value="CYTOCHROME B"/>
    <property type="match status" value="1"/>
</dbReference>
<dbReference type="PANTHER" id="PTHR19271:SF16">
    <property type="entry name" value="CYTOCHROME B"/>
    <property type="match status" value="1"/>
</dbReference>
<dbReference type="Pfam" id="PF00033">
    <property type="entry name" value="Cytochrome_B"/>
    <property type="match status" value="1"/>
</dbReference>
<dbReference type="SUPFAM" id="SSF81342">
    <property type="entry name" value="Transmembrane di-heme cytochromes"/>
    <property type="match status" value="1"/>
</dbReference>
<dbReference type="PROSITE" id="PS51002">
    <property type="entry name" value="CYTB_NTER"/>
    <property type="match status" value="1"/>
</dbReference>
<geneLocation type="mitochondrion"/>
<feature type="chain" id="PRO_0000060891" description="Cytochrome b">
    <location>
        <begin position="1" status="less than"/>
        <end position="79" status="greater than"/>
    </location>
</feature>
<feature type="transmembrane region" description="Helical" evidence="2">
    <location>
        <begin position="1" status="less than"/>
        <end position="7"/>
    </location>
</feature>
<feature type="transmembrane region" description="Helical" evidence="2">
    <location>
        <begin position="31"/>
        <end position="52"/>
    </location>
</feature>
<feature type="transmembrane region" description="Helical" evidence="2">
    <location>
        <begin position="67"/>
        <end position="79" status="greater than"/>
    </location>
</feature>
<feature type="binding site" description="axial binding residue" evidence="2">
    <location>
        <position position="37"/>
    </location>
    <ligand>
        <name>heme b</name>
        <dbReference type="ChEBI" id="CHEBI:60344"/>
        <label>b562</label>
    </ligand>
    <ligandPart>
        <name>Fe</name>
        <dbReference type="ChEBI" id="CHEBI:18248"/>
    </ligandPart>
</feature>
<feature type="binding site" description="axial binding residue" evidence="2">
    <location>
        <position position="51"/>
    </location>
    <ligand>
        <name>heme b</name>
        <dbReference type="ChEBI" id="CHEBI:60344"/>
        <label>b566</label>
    </ligand>
    <ligandPart>
        <name>Fe</name>
        <dbReference type="ChEBI" id="CHEBI:18248"/>
    </ligandPart>
</feature>
<feature type="non-terminal residue">
    <location>
        <position position="1"/>
    </location>
</feature>
<feature type="non-terminal residue">
    <location>
        <position position="79"/>
    </location>
</feature>
<evidence type="ECO:0000250" key="1"/>
<evidence type="ECO:0000250" key="2">
    <source>
        <dbReference type="UniProtKB" id="P00157"/>
    </source>
</evidence>
<evidence type="ECO:0000255" key="3">
    <source>
        <dbReference type="PROSITE-ProRule" id="PRU00968"/>
    </source>
</evidence>
<accession>P16357</accession>